<keyword id="KW-1003">Cell membrane</keyword>
<keyword id="KW-0210">Decarboxylase</keyword>
<keyword id="KW-0285">Flavoprotein</keyword>
<keyword id="KW-0288">FMN</keyword>
<keyword id="KW-0456">Lyase</keyword>
<keyword id="KW-0464">Manganese</keyword>
<keyword id="KW-0472">Membrane</keyword>
<keyword id="KW-0479">Metal-binding</keyword>
<keyword id="KW-0831">Ubiquinone biosynthesis</keyword>
<comment type="function">
    <text evidence="1">Catalyzes the decarboxylation of 3-octaprenyl-4-hydroxy benzoate to 2-octaprenylphenol, an intermediate step in ubiquinone biosynthesis.</text>
</comment>
<comment type="catalytic activity">
    <reaction evidence="1">
        <text>a 4-hydroxy-3-(all-trans-polyprenyl)benzoate + H(+) = a 2-(all-trans-polyprenyl)phenol + CO2</text>
        <dbReference type="Rhea" id="RHEA:41680"/>
        <dbReference type="Rhea" id="RHEA-COMP:9514"/>
        <dbReference type="Rhea" id="RHEA-COMP:9516"/>
        <dbReference type="ChEBI" id="CHEBI:1269"/>
        <dbReference type="ChEBI" id="CHEBI:15378"/>
        <dbReference type="ChEBI" id="CHEBI:16526"/>
        <dbReference type="ChEBI" id="CHEBI:78396"/>
        <dbReference type="EC" id="4.1.1.98"/>
    </reaction>
</comment>
<comment type="cofactor">
    <cofactor evidence="1">
        <name>prenylated FMN</name>
        <dbReference type="ChEBI" id="CHEBI:87746"/>
    </cofactor>
    <text evidence="1">Binds 1 prenylated FMN per subunit.</text>
</comment>
<comment type="cofactor">
    <cofactor evidence="1">
        <name>Mn(2+)</name>
        <dbReference type="ChEBI" id="CHEBI:29035"/>
    </cofactor>
</comment>
<comment type="pathway">
    <text evidence="1">Cofactor biosynthesis; ubiquinone biosynthesis.</text>
</comment>
<comment type="subunit">
    <text evidence="1">Homohexamer.</text>
</comment>
<comment type="subcellular location">
    <subcellularLocation>
        <location evidence="1">Cell membrane</location>
        <topology evidence="1">Peripheral membrane protein</topology>
    </subcellularLocation>
</comment>
<comment type="similarity">
    <text evidence="1">Belongs to the UbiD family.</text>
</comment>
<comment type="sequence caution" evidence="2">
    <conflict type="erroneous initiation">
        <sequence resource="EMBL-CDS" id="ABC37744"/>
    </conflict>
</comment>
<sequence>MKYKDLRDFIHSLEQRGELRRITQPVSPALEMTELCDRVLRAGGPALLFDAPDGYRFPVLGNLFGTPRRVALGMGVDADDNATLASLRDIGRLLSALKEPDPPKSLKDAGKLLSLAKAVWDMGPKTVSAPPCQEIVWEGDDVDLHKLPIQTCWPGDAGPLLTWGLTVTRGPNKTRQNLGIYRQQLIGRNKLIMRWLAHRGGALDFREFALKHPGQPYPVAVVLGADPATALGAVTPVPDTLSEYQFAGLLRGARTELAKCLTPGVDTLQVPARAEIVLEGFIHPQQGAPAPAPEGAPPRPTAGAAAGYEHALEGPYGDHTGYYNEQEWFPVFTVERITMRRDAIYHSTYTGKPPDEPAVLGVALNEVFVPLLQKQFSEITDFYLPPEGCSYRMAIVQMKKSYAGHAKRVMFGVWSFLRQFMYTKFIVVVDEDVNVRDWKEVIWAITTRVDPARDTVLVENTPIDYLDFASPVAGLGSKMGLDATNKWPGETQREWGRPIEMDAAVKARVDRLWTEIGLS</sequence>
<organism>
    <name type="scientific">Burkholderia thailandensis (strain ATCC 700388 / DSM 13276 / CCUG 48851 / CIP 106301 / E264)</name>
    <dbReference type="NCBI Taxonomy" id="271848"/>
    <lineage>
        <taxon>Bacteria</taxon>
        <taxon>Pseudomonadati</taxon>
        <taxon>Pseudomonadota</taxon>
        <taxon>Betaproteobacteria</taxon>
        <taxon>Burkholderiales</taxon>
        <taxon>Burkholderiaceae</taxon>
        <taxon>Burkholderia</taxon>
        <taxon>pseudomallei group</taxon>
    </lineage>
</organism>
<accession>Q2SYC8</accession>
<protein>
    <recommendedName>
        <fullName evidence="1">3-octaprenyl-4-hydroxybenzoate carboxy-lyase</fullName>
        <ecNumber evidence="1">4.1.1.98</ecNumber>
    </recommendedName>
    <alternativeName>
        <fullName evidence="1">Polyprenyl p-hydroxybenzoate decarboxylase</fullName>
    </alternativeName>
</protein>
<name>UBID_BURTA</name>
<feature type="chain" id="PRO_0000267657" description="3-octaprenyl-4-hydroxybenzoate carboxy-lyase">
    <location>
        <begin position="1"/>
        <end position="519"/>
    </location>
</feature>
<feature type="active site" description="Proton donor" evidence="1">
    <location>
        <position position="318"/>
    </location>
</feature>
<feature type="binding site" evidence="1">
    <location>
        <position position="177"/>
    </location>
    <ligand>
        <name>Mn(2+)</name>
        <dbReference type="ChEBI" id="CHEBI:29035"/>
    </ligand>
</feature>
<feature type="binding site" evidence="1">
    <location>
        <begin position="180"/>
        <end position="182"/>
    </location>
    <ligand>
        <name>prenylated FMN</name>
        <dbReference type="ChEBI" id="CHEBI:87746"/>
    </ligand>
</feature>
<feature type="binding site" evidence="1">
    <location>
        <begin position="194"/>
        <end position="196"/>
    </location>
    <ligand>
        <name>prenylated FMN</name>
        <dbReference type="ChEBI" id="CHEBI:87746"/>
    </ligand>
</feature>
<feature type="binding site" evidence="1">
    <location>
        <begin position="199"/>
        <end position="200"/>
    </location>
    <ligand>
        <name>prenylated FMN</name>
        <dbReference type="ChEBI" id="CHEBI:87746"/>
    </ligand>
</feature>
<feature type="binding site" evidence="1">
    <location>
        <position position="243"/>
    </location>
    <ligand>
        <name>Mn(2+)</name>
        <dbReference type="ChEBI" id="CHEBI:29035"/>
    </ligand>
</feature>
<dbReference type="EC" id="4.1.1.98" evidence="1"/>
<dbReference type="EMBL" id="CP000086">
    <property type="protein sequence ID" value="ABC37744.1"/>
    <property type="status" value="ALT_INIT"/>
    <property type="molecule type" value="Genomic_DNA"/>
</dbReference>
<dbReference type="RefSeq" id="WP_009889656.1">
    <property type="nucleotide sequence ID" value="NZ_CP008785.1"/>
</dbReference>
<dbReference type="SMR" id="Q2SYC8"/>
<dbReference type="GeneID" id="45121267"/>
<dbReference type="KEGG" id="bte:BTH_I1526"/>
<dbReference type="HOGENOM" id="CLU_023348_4_1_4"/>
<dbReference type="UniPathway" id="UPA00232"/>
<dbReference type="Proteomes" id="UP000001930">
    <property type="component" value="Chromosome I"/>
</dbReference>
<dbReference type="GO" id="GO:0005829">
    <property type="term" value="C:cytosol"/>
    <property type="evidence" value="ECO:0007669"/>
    <property type="project" value="TreeGrafter"/>
</dbReference>
<dbReference type="GO" id="GO:0005886">
    <property type="term" value="C:plasma membrane"/>
    <property type="evidence" value="ECO:0007669"/>
    <property type="project" value="UniProtKB-SubCell"/>
</dbReference>
<dbReference type="GO" id="GO:0008694">
    <property type="term" value="F:3-octaprenyl-4-hydroxybenzoate carboxy-lyase activity"/>
    <property type="evidence" value="ECO:0007669"/>
    <property type="project" value="UniProtKB-UniRule"/>
</dbReference>
<dbReference type="GO" id="GO:0046872">
    <property type="term" value="F:metal ion binding"/>
    <property type="evidence" value="ECO:0007669"/>
    <property type="project" value="UniProtKB-KW"/>
</dbReference>
<dbReference type="GO" id="GO:0006744">
    <property type="term" value="P:ubiquinone biosynthetic process"/>
    <property type="evidence" value="ECO:0007669"/>
    <property type="project" value="UniProtKB-UniRule"/>
</dbReference>
<dbReference type="FunFam" id="1.20.5.570:FF:000001">
    <property type="entry name" value="3-octaprenyl-4-hydroxybenzoate carboxy-lyase"/>
    <property type="match status" value="1"/>
</dbReference>
<dbReference type="FunFam" id="3.40.1670.10:FF:000001">
    <property type="entry name" value="3-octaprenyl-4-hydroxybenzoate carboxy-lyase"/>
    <property type="match status" value="1"/>
</dbReference>
<dbReference type="Gene3D" id="1.20.5.570">
    <property type="entry name" value="Single helix bin"/>
    <property type="match status" value="1"/>
</dbReference>
<dbReference type="Gene3D" id="3.40.1670.10">
    <property type="entry name" value="UbiD C-terminal domain-like"/>
    <property type="match status" value="1"/>
</dbReference>
<dbReference type="HAMAP" id="MF_01636">
    <property type="entry name" value="UbiD"/>
    <property type="match status" value="1"/>
</dbReference>
<dbReference type="InterPro" id="IPR002830">
    <property type="entry name" value="UbiD"/>
</dbReference>
<dbReference type="InterPro" id="IPR049381">
    <property type="entry name" value="UbiD-like_C"/>
</dbReference>
<dbReference type="InterPro" id="IPR049383">
    <property type="entry name" value="UbiD-like_N"/>
</dbReference>
<dbReference type="InterPro" id="IPR023677">
    <property type="entry name" value="UbiD_bacteria"/>
</dbReference>
<dbReference type="InterPro" id="IPR048304">
    <property type="entry name" value="UbiD_Rift_dom"/>
</dbReference>
<dbReference type="NCBIfam" id="TIGR00148">
    <property type="entry name" value="UbiD family decarboxylase"/>
    <property type="match status" value="2"/>
</dbReference>
<dbReference type="PANTHER" id="PTHR30108">
    <property type="entry name" value="3-OCTAPRENYL-4-HYDROXYBENZOATE CARBOXY-LYASE-RELATED"/>
    <property type="match status" value="1"/>
</dbReference>
<dbReference type="PANTHER" id="PTHR30108:SF17">
    <property type="entry name" value="FERULIC ACID DECARBOXYLASE 1"/>
    <property type="match status" value="1"/>
</dbReference>
<dbReference type="Pfam" id="PF01977">
    <property type="entry name" value="UbiD"/>
    <property type="match status" value="1"/>
</dbReference>
<dbReference type="Pfam" id="PF20696">
    <property type="entry name" value="UbiD_C"/>
    <property type="match status" value="1"/>
</dbReference>
<dbReference type="Pfam" id="PF20695">
    <property type="entry name" value="UbiD_N"/>
    <property type="match status" value="1"/>
</dbReference>
<dbReference type="SUPFAM" id="SSF50475">
    <property type="entry name" value="FMN-binding split barrel"/>
    <property type="match status" value="1"/>
</dbReference>
<dbReference type="SUPFAM" id="SSF143968">
    <property type="entry name" value="UbiD C-terminal domain-like"/>
    <property type="match status" value="1"/>
</dbReference>
<proteinExistence type="inferred from homology"/>
<gene>
    <name evidence="1" type="primary">ubiD</name>
    <name type="ordered locus">BTH_I1526</name>
</gene>
<evidence type="ECO:0000255" key="1">
    <source>
        <dbReference type="HAMAP-Rule" id="MF_01636"/>
    </source>
</evidence>
<evidence type="ECO:0000305" key="2"/>
<reference key="1">
    <citation type="journal article" date="2005" name="BMC Genomics">
        <title>Bacterial genome adaptation to niches: divergence of the potential virulence genes in three Burkholderia species of different survival strategies.</title>
        <authorList>
            <person name="Kim H.S."/>
            <person name="Schell M.A."/>
            <person name="Yu Y."/>
            <person name="Ulrich R.L."/>
            <person name="Sarria S.H."/>
            <person name="Nierman W.C."/>
            <person name="DeShazer D."/>
        </authorList>
    </citation>
    <scope>NUCLEOTIDE SEQUENCE [LARGE SCALE GENOMIC DNA]</scope>
    <source>
        <strain>ATCC 700388 / DSM 13276 / CCUG 48851 / CIP 106301 / E264</strain>
    </source>
</reference>